<reference key="1">
    <citation type="journal article" date="2009" name="J. Bacteriol.">
        <title>Genomic sequencing reveals regulatory mutations and recombinational events in the widely used MC4100 lineage of Escherichia coli K-12.</title>
        <authorList>
            <person name="Ferenci T."/>
            <person name="Zhou Z."/>
            <person name="Betteridge T."/>
            <person name="Ren Y."/>
            <person name="Liu Y."/>
            <person name="Feng L."/>
            <person name="Reeves P.R."/>
            <person name="Wang L."/>
        </authorList>
    </citation>
    <scope>NUCLEOTIDE SEQUENCE [LARGE SCALE GENOMIC DNA]</scope>
    <source>
        <strain>K12 / MC4100 / BW2952</strain>
    </source>
</reference>
<comment type="function">
    <text evidence="1">One of the primary rRNA binding proteins, it binds directly to 16S rRNA where it nucleates assembly of the head domain of the 30S subunit. Is located at the subunit interface close to the decoding center, probably blocks exit of the E-site tRNA.</text>
</comment>
<comment type="subunit">
    <text evidence="1">Part of the 30S ribosomal subunit. Contacts proteins S9 and S11.</text>
</comment>
<comment type="similarity">
    <text evidence="1">Belongs to the universal ribosomal protein uS7 family.</text>
</comment>
<keyword id="KW-0687">Ribonucleoprotein</keyword>
<keyword id="KW-0689">Ribosomal protein</keyword>
<keyword id="KW-0694">RNA-binding</keyword>
<keyword id="KW-0699">rRNA-binding</keyword>
<keyword id="KW-0820">tRNA-binding</keyword>
<feature type="chain" id="PRO_1000206401" description="Small ribosomal subunit protein uS7">
    <location>
        <begin position="1"/>
        <end position="179"/>
    </location>
</feature>
<proteinExistence type="inferred from homology"/>
<organism>
    <name type="scientific">Escherichia coli (strain K12 / MC4100 / BW2952)</name>
    <dbReference type="NCBI Taxonomy" id="595496"/>
    <lineage>
        <taxon>Bacteria</taxon>
        <taxon>Pseudomonadati</taxon>
        <taxon>Pseudomonadota</taxon>
        <taxon>Gammaproteobacteria</taxon>
        <taxon>Enterobacterales</taxon>
        <taxon>Enterobacteriaceae</taxon>
        <taxon>Escherichia</taxon>
    </lineage>
</organism>
<accession>C4ZUJ6</accession>
<evidence type="ECO:0000255" key="1">
    <source>
        <dbReference type="HAMAP-Rule" id="MF_00480"/>
    </source>
</evidence>
<evidence type="ECO:0000305" key="2"/>
<name>RS7_ECOBW</name>
<gene>
    <name evidence="1" type="primary">rpsG</name>
    <name type="ordered locus">BWG_3032</name>
</gene>
<sequence length="179" mass="20019">MPRRRVIGQRKILPDPKFGSELLAKFVNILMVDGKKSTAESIVYSALETLAQRSGKSELEAFEVALENVRPTVEVKSRRVGGSTYQVPVEVRPVRRNALAMRWIVEAARKRGDKSMALRLANELSDAAENKGTAVKKREDVHRMAEANKAFAHYRWLSLRSFSHQAGASSKQPALGYLN</sequence>
<protein>
    <recommendedName>
        <fullName evidence="1">Small ribosomal subunit protein uS7</fullName>
    </recommendedName>
    <alternativeName>
        <fullName evidence="2">30S ribosomal protein S7</fullName>
    </alternativeName>
</protein>
<dbReference type="EMBL" id="CP001396">
    <property type="protein sequence ID" value="ACR61800.1"/>
    <property type="molecule type" value="Genomic_DNA"/>
</dbReference>
<dbReference type="EMDB" id="EMD-12857"/>
<dbReference type="EMDB" id="EMD-51517"/>
<dbReference type="SMR" id="C4ZUJ6"/>
<dbReference type="KEGG" id="ebw:BWG_3032"/>
<dbReference type="HOGENOM" id="CLU_072226_1_1_6"/>
<dbReference type="GO" id="GO:0015935">
    <property type="term" value="C:small ribosomal subunit"/>
    <property type="evidence" value="ECO:0007669"/>
    <property type="project" value="InterPro"/>
</dbReference>
<dbReference type="GO" id="GO:0019843">
    <property type="term" value="F:rRNA binding"/>
    <property type="evidence" value="ECO:0007669"/>
    <property type="project" value="UniProtKB-UniRule"/>
</dbReference>
<dbReference type="GO" id="GO:0003735">
    <property type="term" value="F:structural constituent of ribosome"/>
    <property type="evidence" value="ECO:0007669"/>
    <property type="project" value="InterPro"/>
</dbReference>
<dbReference type="GO" id="GO:0000049">
    <property type="term" value="F:tRNA binding"/>
    <property type="evidence" value="ECO:0007669"/>
    <property type="project" value="UniProtKB-UniRule"/>
</dbReference>
<dbReference type="GO" id="GO:0006412">
    <property type="term" value="P:translation"/>
    <property type="evidence" value="ECO:0007669"/>
    <property type="project" value="UniProtKB-UniRule"/>
</dbReference>
<dbReference type="CDD" id="cd14869">
    <property type="entry name" value="uS7_Bacteria"/>
    <property type="match status" value="1"/>
</dbReference>
<dbReference type="FunFam" id="1.10.455.10:FF:000001">
    <property type="entry name" value="30S ribosomal protein S7"/>
    <property type="match status" value="1"/>
</dbReference>
<dbReference type="Gene3D" id="1.10.455.10">
    <property type="entry name" value="Ribosomal protein S7 domain"/>
    <property type="match status" value="1"/>
</dbReference>
<dbReference type="HAMAP" id="MF_00480_B">
    <property type="entry name" value="Ribosomal_uS7_B"/>
    <property type="match status" value="1"/>
</dbReference>
<dbReference type="InterPro" id="IPR000235">
    <property type="entry name" value="Ribosomal_uS7"/>
</dbReference>
<dbReference type="InterPro" id="IPR005717">
    <property type="entry name" value="Ribosomal_uS7_bac/org-type"/>
</dbReference>
<dbReference type="InterPro" id="IPR020606">
    <property type="entry name" value="Ribosomal_uS7_CS"/>
</dbReference>
<dbReference type="InterPro" id="IPR023798">
    <property type="entry name" value="Ribosomal_uS7_dom"/>
</dbReference>
<dbReference type="InterPro" id="IPR036823">
    <property type="entry name" value="Ribosomal_uS7_dom_sf"/>
</dbReference>
<dbReference type="NCBIfam" id="TIGR01029">
    <property type="entry name" value="rpsG_bact"/>
    <property type="match status" value="1"/>
</dbReference>
<dbReference type="PANTHER" id="PTHR11205">
    <property type="entry name" value="RIBOSOMAL PROTEIN S7"/>
    <property type="match status" value="1"/>
</dbReference>
<dbReference type="Pfam" id="PF00177">
    <property type="entry name" value="Ribosomal_S7"/>
    <property type="match status" value="1"/>
</dbReference>
<dbReference type="PIRSF" id="PIRSF002122">
    <property type="entry name" value="RPS7p_RPS7a_RPS5e_RPS7o"/>
    <property type="match status" value="1"/>
</dbReference>
<dbReference type="SUPFAM" id="SSF47973">
    <property type="entry name" value="Ribosomal protein S7"/>
    <property type="match status" value="1"/>
</dbReference>
<dbReference type="PROSITE" id="PS00052">
    <property type="entry name" value="RIBOSOMAL_S7"/>
    <property type="match status" value="1"/>
</dbReference>